<keyword id="KW-0150">Chloroplast</keyword>
<keyword id="KW-0249">Electron transport</keyword>
<keyword id="KW-0472">Membrane</keyword>
<keyword id="KW-0602">Photosynthesis</keyword>
<keyword id="KW-0934">Plastid</keyword>
<keyword id="KW-0793">Thylakoid</keyword>
<keyword id="KW-0812">Transmembrane</keyword>
<keyword id="KW-1133">Transmembrane helix</keyword>
<keyword id="KW-0813">Transport</keyword>
<gene>
    <name evidence="1" type="primary">petG</name>
</gene>
<sequence>MIEVFLFGIVLGLIPITLAGLFVTAYLQYRRGDQLDL</sequence>
<name>PETG_OENEH</name>
<protein>
    <recommendedName>
        <fullName evidence="1">Cytochrome b6-f complex subunit 5</fullName>
    </recommendedName>
    <alternativeName>
        <fullName evidence="1">Cytochrome b6-f complex subunit PetG</fullName>
    </alternativeName>
    <alternativeName>
        <fullName evidence="1">Cytochrome b6-f complex subunit V</fullName>
    </alternativeName>
</protein>
<feature type="chain" id="PRO_0000216393" description="Cytochrome b6-f complex subunit 5">
    <location>
        <begin position="1"/>
        <end position="37"/>
    </location>
</feature>
<feature type="transmembrane region" description="Helical" evidence="1">
    <location>
        <begin position="5"/>
        <end position="25"/>
    </location>
</feature>
<accession>P69458</accession>
<accession>P12121</accession>
<accession>P32973</accession>
<dbReference type="EMBL" id="AJ271079">
    <property type="protein sequence ID" value="CAB67176.1"/>
    <property type="molecule type" value="Genomic_DNA"/>
</dbReference>
<dbReference type="RefSeq" id="NP_084711.1">
    <property type="nucleotide sequence ID" value="NC_002693.2"/>
</dbReference>
<dbReference type="SMR" id="P69458"/>
<dbReference type="GeneID" id="802758"/>
<dbReference type="GO" id="GO:0009535">
    <property type="term" value="C:chloroplast thylakoid membrane"/>
    <property type="evidence" value="ECO:0007669"/>
    <property type="project" value="UniProtKB-SubCell"/>
</dbReference>
<dbReference type="GO" id="GO:0009512">
    <property type="term" value="C:cytochrome b6f complex"/>
    <property type="evidence" value="ECO:0007669"/>
    <property type="project" value="InterPro"/>
</dbReference>
<dbReference type="GO" id="GO:0045158">
    <property type="term" value="F:electron transporter, transferring electrons within cytochrome b6/f complex of photosystem II activity"/>
    <property type="evidence" value="ECO:0007669"/>
    <property type="project" value="UniProtKB-UniRule"/>
</dbReference>
<dbReference type="GO" id="GO:0017004">
    <property type="term" value="P:cytochrome complex assembly"/>
    <property type="evidence" value="ECO:0007669"/>
    <property type="project" value="UniProtKB-UniRule"/>
</dbReference>
<dbReference type="GO" id="GO:0015979">
    <property type="term" value="P:photosynthesis"/>
    <property type="evidence" value="ECO:0007669"/>
    <property type="project" value="UniProtKB-KW"/>
</dbReference>
<dbReference type="HAMAP" id="MF_00432">
    <property type="entry name" value="Cytb6_f_PetG"/>
    <property type="match status" value="1"/>
</dbReference>
<dbReference type="InterPro" id="IPR003683">
    <property type="entry name" value="Cyt_6/f_cplx_su5"/>
</dbReference>
<dbReference type="InterPro" id="IPR036099">
    <property type="entry name" value="Cyt_6/f_cplx_su5_sf"/>
</dbReference>
<dbReference type="NCBIfam" id="NF001907">
    <property type="entry name" value="PRK00665.1"/>
    <property type="match status" value="1"/>
</dbReference>
<dbReference type="Pfam" id="PF02529">
    <property type="entry name" value="PetG"/>
    <property type="match status" value="1"/>
</dbReference>
<dbReference type="PIRSF" id="PIRSF000034">
    <property type="entry name" value="Cyt_b6-f_V"/>
    <property type="match status" value="1"/>
</dbReference>
<dbReference type="SUPFAM" id="SSF103446">
    <property type="entry name" value="PetG subunit of the cytochrome b6f complex"/>
    <property type="match status" value="1"/>
</dbReference>
<evidence type="ECO:0000255" key="1">
    <source>
        <dbReference type="HAMAP-Rule" id="MF_00432"/>
    </source>
</evidence>
<geneLocation type="chloroplast"/>
<comment type="function">
    <text evidence="1">Component of the cytochrome b6-f complex, which mediates electron transfer between photosystem II (PSII) and photosystem I (PSI), cyclic electron flow around PSI, and state transitions. PetG is required for either the stability or assembly of the cytochrome b6-f complex.</text>
</comment>
<comment type="subunit">
    <text evidence="1">The 4 large subunits of the cytochrome b6-f complex are cytochrome b6, subunit IV (17 kDa polypeptide, PetD), cytochrome f and the Rieske protein, while the 4 small subunits are PetG, PetL, PetM and PetN. The complex functions as a dimer.</text>
</comment>
<comment type="subcellular location">
    <subcellularLocation>
        <location evidence="1">Plastid</location>
        <location evidence="1">Chloroplast thylakoid membrane</location>
        <topology evidence="1">Single-pass membrane protein</topology>
    </subcellularLocation>
</comment>
<comment type="similarity">
    <text evidence="1">Belongs to the PetG family.</text>
</comment>
<reference key="1">
    <citation type="journal article" date="2000" name="Mol. Gen. Genet.">
        <title>Complete nucleotide sequence of the Oenothera elata plastid chromosome, representing plastome I of the five distinguishable Euoenothera plastomes.</title>
        <authorList>
            <person name="Hupfer H."/>
            <person name="Swiatek M."/>
            <person name="Hornung S."/>
            <person name="Herrmann R.G."/>
            <person name="Maier R.M."/>
            <person name="Chiu W.-L."/>
            <person name="Sears B."/>
        </authorList>
    </citation>
    <scope>NUCLEOTIDE SEQUENCE [LARGE SCALE GENOMIC DNA]</scope>
    <source>
        <strain>cv. Johansen</strain>
    </source>
</reference>
<proteinExistence type="inferred from homology"/>
<organism>
    <name type="scientific">Oenothera elata subsp. hookeri</name>
    <name type="common">Hooker's evening primrose</name>
    <name type="synonym">Oenothera hookeri</name>
    <dbReference type="NCBI Taxonomy" id="85636"/>
    <lineage>
        <taxon>Eukaryota</taxon>
        <taxon>Viridiplantae</taxon>
        <taxon>Streptophyta</taxon>
        <taxon>Embryophyta</taxon>
        <taxon>Tracheophyta</taxon>
        <taxon>Spermatophyta</taxon>
        <taxon>Magnoliopsida</taxon>
        <taxon>eudicotyledons</taxon>
        <taxon>Gunneridae</taxon>
        <taxon>Pentapetalae</taxon>
        <taxon>rosids</taxon>
        <taxon>malvids</taxon>
        <taxon>Myrtales</taxon>
        <taxon>Onagraceae</taxon>
        <taxon>Onagroideae</taxon>
        <taxon>Onagreae</taxon>
        <taxon>Oenothera</taxon>
    </lineage>
</organism>